<sequence length="333" mass="37113">MDERLLSGESAYEDADLEYSLRPQTLRQYIGQDKAKHNLEVFIEAAKMREETLDHVLLYGPPGLGKTTLANIIANEMGVNVRTTSGPAIERPGDLAAVLTSLQPGDVLFIDEIHRLHRSIEEVLYPAMEDFCLDIVIGKGPSARSVRLDLPPFTLVGATTRAGALSAPLRDRFGVLSRLEYYTVDQLSEIVERTAEVFEVEIDSLAALEIARRARGTPRIANRLLRRVRDFAQVRGNGTVTMEITQMALELLQVDKLGLDHIDHKLLLGIIEKFRGGPVGLETVSATIGEESHTIEDVYEPYLLQIGFLQRTPRGRIVTPLAYEHFGMEMPKV</sequence>
<proteinExistence type="inferred from homology"/>
<protein>
    <recommendedName>
        <fullName evidence="1">Holliday junction branch migration complex subunit RuvB</fullName>
        <ecNumber evidence="1">3.6.4.-</ecNumber>
    </recommendedName>
</protein>
<name>RUVB_BACC1</name>
<keyword id="KW-0067">ATP-binding</keyword>
<keyword id="KW-0963">Cytoplasm</keyword>
<keyword id="KW-0227">DNA damage</keyword>
<keyword id="KW-0233">DNA recombination</keyword>
<keyword id="KW-0234">DNA repair</keyword>
<keyword id="KW-0238">DNA-binding</keyword>
<keyword id="KW-0378">Hydrolase</keyword>
<keyword id="KW-0547">Nucleotide-binding</keyword>
<gene>
    <name evidence="1" type="primary">ruvB</name>
    <name type="ordered locus">BCE_4505</name>
</gene>
<comment type="function">
    <text evidence="1">The RuvA-RuvB-RuvC complex processes Holliday junction (HJ) DNA during genetic recombination and DNA repair, while the RuvA-RuvB complex plays an important role in the rescue of blocked DNA replication forks via replication fork reversal (RFR). RuvA specifically binds to HJ cruciform DNA, conferring on it an open structure. The RuvB hexamer acts as an ATP-dependent pump, pulling dsDNA into and through the RuvAB complex. RuvB forms 2 homohexamers on either side of HJ DNA bound by 1 or 2 RuvA tetramers; 4 subunits per hexamer contact DNA at a time. Coordinated motions by a converter formed by DNA-disengaged RuvB subunits stimulates ATP hydrolysis and nucleotide exchange. Immobilization of the converter enables RuvB to convert the ATP-contained energy into a lever motion, pulling 2 nucleotides of DNA out of the RuvA tetramer per ATP hydrolyzed, thus driving DNA branch migration. The RuvB motors rotate together with the DNA substrate, which together with the progressing nucleotide cycle form the mechanistic basis for DNA recombination by continuous HJ branch migration. Branch migration allows RuvC to scan DNA until it finds its consensus sequence, where it cleaves and resolves cruciform DNA.</text>
</comment>
<comment type="catalytic activity">
    <reaction evidence="1">
        <text>ATP + H2O = ADP + phosphate + H(+)</text>
        <dbReference type="Rhea" id="RHEA:13065"/>
        <dbReference type="ChEBI" id="CHEBI:15377"/>
        <dbReference type="ChEBI" id="CHEBI:15378"/>
        <dbReference type="ChEBI" id="CHEBI:30616"/>
        <dbReference type="ChEBI" id="CHEBI:43474"/>
        <dbReference type="ChEBI" id="CHEBI:456216"/>
    </reaction>
</comment>
<comment type="subunit">
    <text evidence="1">Homohexamer. Forms an RuvA(8)-RuvB(12)-Holliday junction (HJ) complex. HJ DNA is sandwiched between 2 RuvA tetramers; dsDNA enters through RuvA and exits via RuvB. An RuvB hexamer assembles on each DNA strand where it exits the tetramer. Each RuvB hexamer is contacted by two RuvA subunits (via domain III) on 2 adjacent RuvB subunits; this complex drives branch migration. In the full resolvosome a probable DNA-RuvA(4)-RuvB(12)-RuvC(2) complex forms which resolves the HJ.</text>
</comment>
<comment type="subcellular location">
    <subcellularLocation>
        <location evidence="1">Cytoplasm</location>
    </subcellularLocation>
</comment>
<comment type="domain">
    <text evidence="1">Has 3 domains, the large (RuvB-L) and small ATPase (RuvB-S) domains and the C-terminal head (RuvB-H) domain. The head domain binds DNA, while the ATPase domains jointly bind ATP, ADP or are empty depending on the state of the subunit in the translocation cycle. During a single DNA translocation step the structure of each domain remains the same, but their relative positions change.</text>
</comment>
<comment type="similarity">
    <text evidence="1">Belongs to the RuvB family.</text>
</comment>
<accession>P61528</accession>
<dbReference type="EC" id="3.6.4.-" evidence="1"/>
<dbReference type="EMBL" id="AE017194">
    <property type="protein sequence ID" value="AAS43406.1"/>
    <property type="molecule type" value="Genomic_DNA"/>
</dbReference>
<dbReference type="SMR" id="P61528"/>
<dbReference type="KEGG" id="bca:BCE_4505"/>
<dbReference type="HOGENOM" id="CLU_055599_1_0_9"/>
<dbReference type="Proteomes" id="UP000002527">
    <property type="component" value="Chromosome"/>
</dbReference>
<dbReference type="GO" id="GO:0005737">
    <property type="term" value="C:cytoplasm"/>
    <property type="evidence" value="ECO:0007669"/>
    <property type="project" value="UniProtKB-SubCell"/>
</dbReference>
<dbReference type="GO" id="GO:0048476">
    <property type="term" value="C:Holliday junction resolvase complex"/>
    <property type="evidence" value="ECO:0007669"/>
    <property type="project" value="UniProtKB-UniRule"/>
</dbReference>
<dbReference type="GO" id="GO:0005524">
    <property type="term" value="F:ATP binding"/>
    <property type="evidence" value="ECO:0007669"/>
    <property type="project" value="UniProtKB-UniRule"/>
</dbReference>
<dbReference type="GO" id="GO:0016887">
    <property type="term" value="F:ATP hydrolysis activity"/>
    <property type="evidence" value="ECO:0007669"/>
    <property type="project" value="InterPro"/>
</dbReference>
<dbReference type="GO" id="GO:0000400">
    <property type="term" value="F:four-way junction DNA binding"/>
    <property type="evidence" value="ECO:0007669"/>
    <property type="project" value="UniProtKB-UniRule"/>
</dbReference>
<dbReference type="GO" id="GO:0009378">
    <property type="term" value="F:four-way junction helicase activity"/>
    <property type="evidence" value="ECO:0007669"/>
    <property type="project" value="InterPro"/>
</dbReference>
<dbReference type="GO" id="GO:0006310">
    <property type="term" value="P:DNA recombination"/>
    <property type="evidence" value="ECO:0007669"/>
    <property type="project" value="UniProtKB-UniRule"/>
</dbReference>
<dbReference type="GO" id="GO:0006281">
    <property type="term" value="P:DNA repair"/>
    <property type="evidence" value="ECO:0007669"/>
    <property type="project" value="UniProtKB-UniRule"/>
</dbReference>
<dbReference type="CDD" id="cd00009">
    <property type="entry name" value="AAA"/>
    <property type="match status" value="1"/>
</dbReference>
<dbReference type="Gene3D" id="1.10.8.60">
    <property type="match status" value="1"/>
</dbReference>
<dbReference type="Gene3D" id="3.40.50.300">
    <property type="entry name" value="P-loop containing nucleotide triphosphate hydrolases"/>
    <property type="match status" value="1"/>
</dbReference>
<dbReference type="Gene3D" id="1.10.10.10">
    <property type="entry name" value="Winged helix-like DNA-binding domain superfamily/Winged helix DNA-binding domain"/>
    <property type="match status" value="1"/>
</dbReference>
<dbReference type="HAMAP" id="MF_00016">
    <property type="entry name" value="DNA_HJ_migration_RuvB"/>
    <property type="match status" value="1"/>
</dbReference>
<dbReference type="InterPro" id="IPR003593">
    <property type="entry name" value="AAA+_ATPase"/>
</dbReference>
<dbReference type="InterPro" id="IPR041445">
    <property type="entry name" value="AAA_lid_4"/>
</dbReference>
<dbReference type="InterPro" id="IPR004605">
    <property type="entry name" value="DNA_helicase_Holl-junc_RuvB"/>
</dbReference>
<dbReference type="InterPro" id="IPR027417">
    <property type="entry name" value="P-loop_NTPase"/>
</dbReference>
<dbReference type="InterPro" id="IPR008824">
    <property type="entry name" value="RuvB-like_N"/>
</dbReference>
<dbReference type="InterPro" id="IPR008823">
    <property type="entry name" value="RuvB_C"/>
</dbReference>
<dbReference type="InterPro" id="IPR036388">
    <property type="entry name" value="WH-like_DNA-bd_sf"/>
</dbReference>
<dbReference type="InterPro" id="IPR036390">
    <property type="entry name" value="WH_DNA-bd_sf"/>
</dbReference>
<dbReference type="NCBIfam" id="NF000868">
    <property type="entry name" value="PRK00080.1"/>
    <property type="match status" value="1"/>
</dbReference>
<dbReference type="NCBIfam" id="TIGR00635">
    <property type="entry name" value="ruvB"/>
    <property type="match status" value="1"/>
</dbReference>
<dbReference type="PANTHER" id="PTHR42848">
    <property type="match status" value="1"/>
</dbReference>
<dbReference type="PANTHER" id="PTHR42848:SF1">
    <property type="entry name" value="HOLLIDAY JUNCTION BRANCH MIGRATION COMPLEX SUBUNIT RUVB"/>
    <property type="match status" value="1"/>
</dbReference>
<dbReference type="Pfam" id="PF17864">
    <property type="entry name" value="AAA_lid_4"/>
    <property type="match status" value="1"/>
</dbReference>
<dbReference type="Pfam" id="PF05491">
    <property type="entry name" value="RuvB_C"/>
    <property type="match status" value="1"/>
</dbReference>
<dbReference type="Pfam" id="PF05496">
    <property type="entry name" value="RuvB_N"/>
    <property type="match status" value="1"/>
</dbReference>
<dbReference type="SMART" id="SM00382">
    <property type="entry name" value="AAA"/>
    <property type="match status" value="1"/>
</dbReference>
<dbReference type="SUPFAM" id="SSF52540">
    <property type="entry name" value="P-loop containing nucleoside triphosphate hydrolases"/>
    <property type="match status" value="1"/>
</dbReference>
<dbReference type="SUPFAM" id="SSF46785">
    <property type="entry name" value="Winged helix' DNA-binding domain"/>
    <property type="match status" value="1"/>
</dbReference>
<evidence type="ECO:0000255" key="1">
    <source>
        <dbReference type="HAMAP-Rule" id="MF_00016"/>
    </source>
</evidence>
<feature type="chain" id="PRO_0000165485" description="Holliday junction branch migration complex subunit RuvB">
    <location>
        <begin position="1"/>
        <end position="333"/>
    </location>
</feature>
<feature type="region of interest" description="Large ATPase domain (RuvB-L)" evidence="1">
    <location>
        <begin position="1"/>
        <end position="182"/>
    </location>
</feature>
<feature type="region of interest" description="Small ATPAse domain (RuvB-S)" evidence="1">
    <location>
        <begin position="183"/>
        <end position="253"/>
    </location>
</feature>
<feature type="region of interest" description="Head domain (RuvB-H)" evidence="1">
    <location>
        <begin position="256"/>
        <end position="333"/>
    </location>
</feature>
<feature type="binding site" evidence="1">
    <location>
        <position position="21"/>
    </location>
    <ligand>
        <name>ATP</name>
        <dbReference type="ChEBI" id="CHEBI:30616"/>
    </ligand>
</feature>
<feature type="binding site" evidence="1">
    <location>
        <position position="22"/>
    </location>
    <ligand>
        <name>ATP</name>
        <dbReference type="ChEBI" id="CHEBI:30616"/>
    </ligand>
</feature>
<feature type="binding site" evidence="1">
    <location>
        <position position="63"/>
    </location>
    <ligand>
        <name>ATP</name>
        <dbReference type="ChEBI" id="CHEBI:30616"/>
    </ligand>
</feature>
<feature type="binding site" evidence="1">
    <location>
        <position position="66"/>
    </location>
    <ligand>
        <name>ATP</name>
        <dbReference type="ChEBI" id="CHEBI:30616"/>
    </ligand>
</feature>
<feature type="binding site" evidence="1">
    <location>
        <position position="67"/>
    </location>
    <ligand>
        <name>ATP</name>
        <dbReference type="ChEBI" id="CHEBI:30616"/>
    </ligand>
</feature>
<feature type="binding site" evidence="1">
    <location>
        <position position="67"/>
    </location>
    <ligand>
        <name>Mg(2+)</name>
        <dbReference type="ChEBI" id="CHEBI:18420"/>
    </ligand>
</feature>
<feature type="binding site" evidence="1">
    <location>
        <position position="68"/>
    </location>
    <ligand>
        <name>ATP</name>
        <dbReference type="ChEBI" id="CHEBI:30616"/>
    </ligand>
</feature>
<feature type="binding site" evidence="1">
    <location>
        <begin position="129"/>
        <end position="131"/>
    </location>
    <ligand>
        <name>ATP</name>
        <dbReference type="ChEBI" id="CHEBI:30616"/>
    </ligand>
</feature>
<feature type="binding site" evidence="1">
    <location>
        <position position="172"/>
    </location>
    <ligand>
        <name>ATP</name>
        <dbReference type="ChEBI" id="CHEBI:30616"/>
    </ligand>
</feature>
<feature type="binding site" evidence="1">
    <location>
        <position position="182"/>
    </location>
    <ligand>
        <name>ATP</name>
        <dbReference type="ChEBI" id="CHEBI:30616"/>
    </ligand>
</feature>
<feature type="binding site" evidence="1">
    <location>
        <position position="219"/>
    </location>
    <ligand>
        <name>ATP</name>
        <dbReference type="ChEBI" id="CHEBI:30616"/>
    </ligand>
</feature>
<feature type="binding site" evidence="1">
    <location>
        <position position="311"/>
    </location>
    <ligand>
        <name>DNA</name>
        <dbReference type="ChEBI" id="CHEBI:16991"/>
    </ligand>
</feature>
<feature type="binding site" evidence="1">
    <location>
        <position position="316"/>
    </location>
    <ligand>
        <name>DNA</name>
        <dbReference type="ChEBI" id="CHEBI:16991"/>
    </ligand>
</feature>
<organism>
    <name type="scientific">Bacillus cereus (strain ATCC 10987 / NRS 248)</name>
    <dbReference type="NCBI Taxonomy" id="222523"/>
    <lineage>
        <taxon>Bacteria</taxon>
        <taxon>Bacillati</taxon>
        <taxon>Bacillota</taxon>
        <taxon>Bacilli</taxon>
        <taxon>Bacillales</taxon>
        <taxon>Bacillaceae</taxon>
        <taxon>Bacillus</taxon>
        <taxon>Bacillus cereus group</taxon>
    </lineage>
</organism>
<reference key="1">
    <citation type="journal article" date="2004" name="Nucleic Acids Res.">
        <title>The genome sequence of Bacillus cereus ATCC 10987 reveals metabolic adaptations and a large plasmid related to Bacillus anthracis pXO1.</title>
        <authorList>
            <person name="Rasko D.A."/>
            <person name="Ravel J."/>
            <person name="Oekstad O.A."/>
            <person name="Helgason E."/>
            <person name="Cer R.Z."/>
            <person name="Jiang L."/>
            <person name="Shores K.A."/>
            <person name="Fouts D.E."/>
            <person name="Tourasse N.J."/>
            <person name="Angiuoli S.V."/>
            <person name="Kolonay J.F."/>
            <person name="Nelson W.C."/>
            <person name="Kolstoe A.-B."/>
            <person name="Fraser C.M."/>
            <person name="Read T.D."/>
        </authorList>
    </citation>
    <scope>NUCLEOTIDE SEQUENCE [LARGE SCALE GENOMIC DNA]</scope>
    <source>
        <strain>ATCC 10987 / NRS 248</strain>
    </source>
</reference>